<sequence>MIPVRCLSCGKPVSAYFNEYQRRVADGEDPKDVLDDLGLKRYCCRRMLISHVETW</sequence>
<keyword id="KW-0002">3D-structure</keyword>
<keyword id="KW-0963">Cytoplasm</keyword>
<keyword id="KW-0240">DNA-directed RNA polymerase</keyword>
<keyword id="KW-0479">Metal-binding</keyword>
<keyword id="KW-0548">Nucleotidyltransferase</keyword>
<keyword id="KW-1185">Reference proteome</keyword>
<keyword id="KW-0804">Transcription</keyword>
<keyword id="KW-0808">Transferase</keyword>
<keyword id="KW-0862">Zinc</keyword>
<dbReference type="EC" id="2.7.7.6" evidence="1"/>
<dbReference type="EMBL" id="AE000666">
    <property type="protein sequence ID" value="AAB84548.1"/>
    <property type="molecule type" value="Genomic_DNA"/>
</dbReference>
<dbReference type="PIR" id="A69152">
    <property type="entry name" value="A69152"/>
</dbReference>
<dbReference type="RefSeq" id="WP_010875681.1">
    <property type="nucleotide sequence ID" value="NC_000916.1"/>
</dbReference>
<dbReference type="PDB" id="1EF4">
    <property type="method" value="NMR"/>
    <property type="chains" value="A=1-55"/>
</dbReference>
<dbReference type="PDBsum" id="1EF4"/>
<dbReference type="BMRB" id="O26147"/>
<dbReference type="SMR" id="O26147"/>
<dbReference type="FunCoup" id="O26147">
    <property type="interactions" value="63"/>
</dbReference>
<dbReference type="STRING" id="187420.MTH_40"/>
<dbReference type="PaxDb" id="187420-MTH_40"/>
<dbReference type="EnsemblBacteria" id="AAB84548">
    <property type="protein sequence ID" value="AAB84548"/>
    <property type="gene ID" value="MTH_40"/>
</dbReference>
<dbReference type="KEGG" id="mth:MTH_40"/>
<dbReference type="PATRIC" id="fig|187420.15.peg.39"/>
<dbReference type="HOGENOM" id="CLU_143122_1_1_2"/>
<dbReference type="InParanoid" id="O26147"/>
<dbReference type="EvolutionaryTrace" id="O26147"/>
<dbReference type="Proteomes" id="UP000005223">
    <property type="component" value="Chromosome"/>
</dbReference>
<dbReference type="GO" id="GO:0005737">
    <property type="term" value="C:cytoplasm"/>
    <property type="evidence" value="ECO:0007669"/>
    <property type="project" value="UniProtKB-SubCell"/>
</dbReference>
<dbReference type="GO" id="GO:0000428">
    <property type="term" value="C:DNA-directed RNA polymerase complex"/>
    <property type="evidence" value="ECO:0007669"/>
    <property type="project" value="UniProtKB-KW"/>
</dbReference>
<dbReference type="GO" id="GO:0003677">
    <property type="term" value="F:DNA binding"/>
    <property type="evidence" value="ECO:0007669"/>
    <property type="project" value="InterPro"/>
</dbReference>
<dbReference type="GO" id="GO:0003899">
    <property type="term" value="F:DNA-directed RNA polymerase activity"/>
    <property type="evidence" value="ECO:0007669"/>
    <property type="project" value="UniProtKB-UniRule"/>
</dbReference>
<dbReference type="GO" id="GO:0008270">
    <property type="term" value="F:zinc ion binding"/>
    <property type="evidence" value="ECO:0007669"/>
    <property type="project" value="UniProtKB-UniRule"/>
</dbReference>
<dbReference type="GO" id="GO:0006351">
    <property type="term" value="P:DNA-templated transcription"/>
    <property type="evidence" value="ECO:0007669"/>
    <property type="project" value="UniProtKB-UniRule"/>
</dbReference>
<dbReference type="Gene3D" id="1.10.10.60">
    <property type="entry name" value="Homeodomain-like"/>
    <property type="match status" value="1"/>
</dbReference>
<dbReference type="HAMAP" id="MF_00250">
    <property type="entry name" value="RNApol_arch_Rpo10"/>
    <property type="match status" value="1"/>
</dbReference>
<dbReference type="InterPro" id="IPR023580">
    <property type="entry name" value="RNA_pol_su_RPB10"/>
</dbReference>
<dbReference type="InterPro" id="IPR020789">
    <property type="entry name" value="RNA_pol_suN_Zn-BS"/>
</dbReference>
<dbReference type="InterPro" id="IPR000268">
    <property type="entry name" value="RPABC5/Rpb10"/>
</dbReference>
<dbReference type="NCBIfam" id="NF003089">
    <property type="entry name" value="PRK04016.1"/>
    <property type="match status" value="1"/>
</dbReference>
<dbReference type="PANTHER" id="PTHR23431:SF3">
    <property type="entry name" value="DNA-DIRECTED RNA POLYMERASES I, II, AND III SUBUNIT RPABC5"/>
    <property type="match status" value="1"/>
</dbReference>
<dbReference type="PANTHER" id="PTHR23431">
    <property type="entry name" value="DNA-DIRECTED RNA POLYMERASES I, II, AND III SUBUNIT RPABC5 FAMILY MEMBER"/>
    <property type="match status" value="1"/>
</dbReference>
<dbReference type="Pfam" id="PF01194">
    <property type="entry name" value="RNA_pol_N"/>
    <property type="match status" value="1"/>
</dbReference>
<dbReference type="PIRSF" id="PIRSF005653">
    <property type="entry name" value="RNA_pol_N/8_sub"/>
    <property type="match status" value="1"/>
</dbReference>
<dbReference type="SUPFAM" id="SSF46924">
    <property type="entry name" value="RNA polymerase subunit RPB10"/>
    <property type="match status" value="1"/>
</dbReference>
<dbReference type="PROSITE" id="PS01112">
    <property type="entry name" value="RNA_POL_N_8KD"/>
    <property type="match status" value="1"/>
</dbReference>
<comment type="function">
    <text evidence="1">DNA-dependent RNA polymerase (RNAP) catalyzes the transcription of DNA into RNA using the four ribonucleoside triphosphates as substrates.</text>
</comment>
<comment type="catalytic activity">
    <reaction evidence="1">
        <text>RNA(n) + a ribonucleoside 5'-triphosphate = RNA(n+1) + diphosphate</text>
        <dbReference type="Rhea" id="RHEA:21248"/>
        <dbReference type="Rhea" id="RHEA-COMP:14527"/>
        <dbReference type="Rhea" id="RHEA-COMP:17342"/>
        <dbReference type="ChEBI" id="CHEBI:33019"/>
        <dbReference type="ChEBI" id="CHEBI:61557"/>
        <dbReference type="ChEBI" id="CHEBI:140395"/>
        <dbReference type="EC" id="2.7.7.6"/>
    </reaction>
</comment>
<comment type="cofactor">
    <cofactor evidence="1 2">
        <name>Zn(2+)</name>
        <dbReference type="ChEBI" id="CHEBI:29105"/>
    </cofactor>
    <text evidence="1 2">Binds 1 zinc ion.</text>
</comment>
<comment type="subunit">
    <text evidence="1">Part of the RNA polymerase complex.</text>
</comment>
<comment type="subcellular location">
    <subcellularLocation>
        <location evidence="1">Cytoplasm</location>
    </subcellularLocation>
</comment>
<comment type="similarity">
    <text evidence="1">Belongs to the archaeal Rpo10/eukaryotic RPB10 RNA polymerase subunit family.</text>
</comment>
<proteinExistence type="evidence at protein level"/>
<accession>O26147</accession>
<gene>
    <name evidence="1" type="primary">rpo10</name>
    <name evidence="1" type="synonym">rpoN</name>
    <name type="ordered locus">MTH_40</name>
</gene>
<reference key="1">
    <citation type="journal article" date="1997" name="J. Bacteriol.">
        <title>Complete genome sequence of Methanobacterium thermoautotrophicum deltaH: functional analysis and comparative genomics.</title>
        <authorList>
            <person name="Smith D.R."/>
            <person name="Doucette-Stamm L.A."/>
            <person name="Deloughery C."/>
            <person name="Lee H.-M."/>
            <person name="Dubois J."/>
            <person name="Aldredge T."/>
            <person name="Bashirzadeh R."/>
            <person name="Blakely D."/>
            <person name="Cook R."/>
            <person name="Gilbert K."/>
            <person name="Harrison D."/>
            <person name="Hoang L."/>
            <person name="Keagle P."/>
            <person name="Lumm W."/>
            <person name="Pothier B."/>
            <person name="Qiu D."/>
            <person name="Spadafora R."/>
            <person name="Vicare R."/>
            <person name="Wang Y."/>
            <person name="Wierzbowski J."/>
            <person name="Gibson R."/>
            <person name="Jiwani N."/>
            <person name="Caruso A."/>
            <person name="Bush D."/>
            <person name="Safer H."/>
            <person name="Patwell D."/>
            <person name="Prabhakar S."/>
            <person name="McDougall S."/>
            <person name="Shimer G."/>
            <person name="Goyal A."/>
            <person name="Pietrovski S."/>
            <person name="Church G.M."/>
            <person name="Daniels C.J."/>
            <person name="Mao J.-I."/>
            <person name="Rice P."/>
            <person name="Noelling J."/>
            <person name="Reeve J.N."/>
        </authorList>
    </citation>
    <scope>NUCLEOTIDE SEQUENCE [LARGE SCALE GENOMIC DNA]</scope>
    <source>
        <strain>ATCC 29096 / DSM 1053 / JCM 10044 / NBRC 100330 / Delta H</strain>
    </source>
</reference>
<reference key="2">
    <citation type="journal article" date="2000" name="Proc. Natl. Acad. Sci. U.S.A.">
        <title>Zinc-bundle structure of the essential RNA polymerase subunit RPB10 from Methanobacterium thermoautotrophicum.</title>
        <authorList>
            <person name="Mackereth C.D."/>
            <person name="Arrowsmith C.H."/>
            <person name="Edwards A.M."/>
            <person name="McIntosh L.P."/>
        </authorList>
    </citation>
    <scope>STRUCTURE BY NMR IN COMPLEX WITH ZINC</scope>
    <scope>COFACTOR</scope>
    <source>
        <strain>ATCC 29096 / DSM 1053 / JCM 10044 / NBRC 100330 / Delta H</strain>
    </source>
</reference>
<name>RPO10_METTH</name>
<organism>
    <name type="scientific">Methanothermobacter thermautotrophicus (strain ATCC 29096 / DSM 1053 / JCM 10044 / NBRC 100330 / Delta H)</name>
    <name type="common">Methanobacterium thermoautotrophicum</name>
    <dbReference type="NCBI Taxonomy" id="187420"/>
    <lineage>
        <taxon>Archaea</taxon>
        <taxon>Methanobacteriati</taxon>
        <taxon>Methanobacteriota</taxon>
        <taxon>Methanomada group</taxon>
        <taxon>Methanobacteria</taxon>
        <taxon>Methanobacteriales</taxon>
        <taxon>Methanobacteriaceae</taxon>
        <taxon>Methanothermobacter</taxon>
    </lineage>
</organism>
<protein>
    <recommendedName>
        <fullName evidence="1">DNA-directed RNA polymerase subunit Rpo10</fullName>
        <ecNumber evidence="1">2.7.7.6</ecNumber>
    </recommendedName>
    <alternativeName>
        <fullName evidence="1">DNA-directed RNA polymerase subunit N</fullName>
    </alternativeName>
    <alternativeName>
        <fullName evidence="3">RPB10</fullName>
    </alternativeName>
</protein>
<feature type="chain" id="PRO_0000121353" description="DNA-directed RNA polymerase subunit Rpo10">
    <location>
        <begin position="1"/>
        <end position="55"/>
    </location>
</feature>
<feature type="binding site" evidence="1 2 4">
    <location>
        <position position="6"/>
    </location>
    <ligand>
        <name>Zn(2+)</name>
        <dbReference type="ChEBI" id="CHEBI:29105"/>
    </ligand>
</feature>
<feature type="binding site" evidence="1 2 4">
    <location>
        <position position="9"/>
    </location>
    <ligand>
        <name>Zn(2+)</name>
        <dbReference type="ChEBI" id="CHEBI:29105"/>
    </ligand>
</feature>
<feature type="binding site" evidence="1 2 4">
    <location>
        <position position="43"/>
    </location>
    <ligand>
        <name>Zn(2+)</name>
        <dbReference type="ChEBI" id="CHEBI:29105"/>
    </ligand>
</feature>
<feature type="binding site" evidence="1 2 4">
    <location>
        <position position="44"/>
    </location>
    <ligand>
        <name>Zn(2+)</name>
        <dbReference type="ChEBI" id="CHEBI:29105"/>
    </ligand>
</feature>
<feature type="strand" evidence="5">
    <location>
        <begin position="3"/>
        <end position="5"/>
    </location>
</feature>
<feature type="helix" evidence="5">
    <location>
        <begin position="14"/>
        <end position="26"/>
    </location>
</feature>
<feature type="helix" evidence="5">
    <location>
        <begin position="30"/>
        <end position="37"/>
    </location>
</feature>
<feature type="helix" evidence="5">
    <location>
        <begin position="42"/>
        <end position="48"/>
    </location>
</feature>
<feature type="turn" evidence="5">
    <location>
        <begin position="49"/>
        <end position="51"/>
    </location>
</feature>
<evidence type="ECO:0000255" key="1">
    <source>
        <dbReference type="HAMAP-Rule" id="MF_00250"/>
    </source>
</evidence>
<evidence type="ECO:0000269" key="2">
    <source>
    </source>
</evidence>
<evidence type="ECO:0000303" key="3">
    <source>
    </source>
</evidence>
<evidence type="ECO:0007744" key="4">
    <source>
        <dbReference type="PDB" id="1EF4"/>
    </source>
</evidence>
<evidence type="ECO:0007829" key="5">
    <source>
        <dbReference type="PDB" id="1EF4"/>
    </source>
</evidence>